<reference key="1">
    <citation type="journal article" date="2007" name="Microbiology">
        <title>Comparative analysis of the Corynebacterium glutamicum group and complete genome sequence of strain R.</title>
        <authorList>
            <person name="Yukawa H."/>
            <person name="Omumasaba C.A."/>
            <person name="Nonaka H."/>
            <person name="Kos P."/>
            <person name="Okai N."/>
            <person name="Suzuki N."/>
            <person name="Suda M."/>
            <person name="Tsuge Y."/>
            <person name="Watanabe J."/>
            <person name="Ikeda Y."/>
            <person name="Vertes A.A."/>
            <person name="Inui M."/>
        </authorList>
    </citation>
    <scope>NUCLEOTIDE SEQUENCE [LARGE SCALE GENOMIC DNA]</scope>
    <source>
        <strain>R</strain>
    </source>
</reference>
<name>MDH_CORGB</name>
<dbReference type="EC" id="1.1.1.37" evidence="1"/>
<dbReference type="EMBL" id="AP009044">
    <property type="protein sequence ID" value="BAF55266.1"/>
    <property type="molecule type" value="Genomic_DNA"/>
</dbReference>
<dbReference type="RefSeq" id="WP_004567653.1">
    <property type="nucleotide sequence ID" value="NC_009342.1"/>
</dbReference>
<dbReference type="SMR" id="A4QGA0"/>
<dbReference type="KEGG" id="cgt:cgR_2262"/>
<dbReference type="HOGENOM" id="CLU_040727_2_0_11"/>
<dbReference type="PhylomeDB" id="A4QGA0"/>
<dbReference type="Proteomes" id="UP000006698">
    <property type="component" value="Chromosome"/>
</dbReference>
<dbReference type="GO" id="GO:0030060">
    <property type="term" value="F:L-malate dehydrogenase (NAD+) activity"/>
    <property type="evidence" value="ECO:0007669"/>
    <property type="project" value="UniProtKB-UniRule"/>
</dbReference>
<dbReference type="GO" id="GO:0006108">
    <property type="term" value="P:malate metabolic process"/>
    <property type="evidence" value="ECO:0007669"/>
    <property type="project" value="InterPro"/>
</dbReference>
<dbReference type="GO" id="GO:0006099">
    <property type="term" value="P:tricarboxylic acid cycle"/>
    <property type="evidence" value="ECO:0007669"/>
    <property type="project" value="UniProtKB-UniRule"/>
</dbReference>
<dbReference type="CDD" id="cd01338">
    <property type="entry name" value="MDH_chloroplast-like"/>
    <property type="match status" value="1"/>
</dbReference>
<dbReference type="FunFam" id="3.40.50.720:FF:000010">
    <property type="entry name" value="Malate dehydrogenase"/>
    <property type="match status" value="1"/>
</dbReference>
<dbReference type="FunFam" id="3.90.110.10:FF:000002">
    <property type="entry name" value="Malate dehydrogenase"/>
    <property type="match status" value="1"/>
</dbReference>
<dbReference type="Gene3D" id="3.90.110.10">
    <property type="entry name" value="Lactate dehydrogenase/glycoside hydrolase, family 4, C-terminal"/>
    <property type="match status" value="1"/>
</dbReference>
<dbReference type="Gene3D" id="3.40.50.720">
    <property type="entry name" value="NAD(P)-binding Rossmann-like Domain"/>
    <property type="match status" value="1"/>
</dbReference>
<dbReference type="HAMAP" id="MF_01517">
    <property type="entry name" value="Malate_dehydrog_2"/>
    <property type="match status" value="1"/>
</dbReference>
<dbReference type="InterPro" id="IPR001557">
    <property type="entry name" value="L-lactate/malate_DH"/>
</dbReference>
<dbReference type="InterPro" id="IPR022383">
    <property type="entry name" value="Lactate/malate_DH_C"/>
</dbReference>
<dbReference type="InterPro" id="IPR001236">
    <property type="entry name" value="Lactate/malate_DH_N"/>
</dbReference>
<dbReference type="InterPro" id="IPR015955">
    <property type="entry name" value="Lactate_DH/Glyco_Ohase_4_C"/>
</dbReference>
<dbReference type="InterPro" id="IPR010945">
    <property type="entry name" value="Malate_DH_type2"/>
</dbReference>
<dbReference type="InterPro" id="IPR036291">
    <property type="entry name" value="NAD(P)-bd_dom_sf"/>
</dbReference>
<dbReference type="NCBIfam" id="TIGR01759">
    <property type="entry name" value="MalateDH-SF1"/>
    <property type="match status" value="1"/>
</dbReference>
<dbReference type="NCBIfam" id="NF003916">
    <property type="entry name" value="PRK05442.1"/>
    <property type="match status" value="1"/>
</dbReference>
<dbReference type="PANTHER" id="PTHR23382">
    <property type="entry name" value="MALATE DEHYDROGENASE"/>
    <property type="match status" value="1"/>
</dbReference>
<dbReference type="Pfam" id="PF02866">
    <property type="entry name" value="Ldh_1_C"/>
    <property type="match status" value="1"/>
</dbReference>
<dbReference type="Pfam" id="PF00056">
    <property type="entry name" value="Ldh_1_N"/>
    <property type="match status" value="1"/>
</dbReference>
<dbReference type="PIRSF" id="PIRSF000102">
    <property type="entry name" value="Lac_mal_DH"/>
    <property type="match status" value="1"/>
</dbReference>
<dbReference type="SUPFAM" id="SSF56327">
    <property type="entry name" value="LDH C-terminal domain-like"/>
    <property type="match status" value="1"/>
</dbReference>
<dbReference type="SUPFAM" id="SSF51735">
    <property type="entry name" value="NAD(P)-binding Rossmann-fold domains"/>
    <property type="match status" value="1"/>
</dbReference>
<feature type="chain" id="PRO_0000294384" description="Malate dehydrogenase">
    <location>
        <begin position="1"/>
        <end position="328"/>
    </location>
</feature>
<feature type="active site" description="Proton acceptor" evidence="1">
    <location>
        <position position="192"/>
    </location>
</feature>
<feature type="binding site" evidence="1">
    <location>
        <begin position="16"/>
        <end position="22"/>
    </location>
    <ligand>
        <name>NAD(+)</name>
        <dbReference type="ChEBI" id="CHEBI:57540"/>
    </ligand>
</feature>
<feature type="binding site" evidence="1">
    <location>
        <position position="97"/>
    </location>
    <ligand>
        <name>substrate</name>
    </ligand>
</feature>
<feature type="binding site" evidence="1">
    <location>
        <position position="103"/>
    </location>
    <ligand>
        <name>substrate</name>
    </ligand>
</feature>
<feature type="binding site" evidence="1">
    <location>
        <position position="110"/>
    </location>
    <ligand>
        <name>NAD(+)</name>
        <dbReference type="ChEBI" id="CHEBI:57540"/>
    </ligand>
</feature>
<feature type="binding site" evidence="1">
    <location>
        <position position="117"/>
    </location>
    <ligand>
        <name>NAD(+)</name>
        <dbReference type="ChEBI" id="CHEBI:57540"/>
    </ligand>
</feature>
<feature type="binding site" evidence="1">
    <location>
        <begin position="134"/>
        <end position="136"/>
    </location>
    <ligand>
        <name>NAD(+)</name>
        <dbReference type="ChEBI" id="CHEBI:57540"/>
    </ligand>
</feature>
<feature type="binding site" evidence="1">
    <location>
        <position position="136"/>
    </location>
    <ligand>
        <name>substrate</name>
    </ligand>
</feature>
<feature type="binding site" evidence="1">
    <location>
        <position position="167"/>
    </location>
    <ligand>
        <name>substrate</name>
    </ligand>
</feature>
<sequence>MNSPQNVSTKKVTVTGAAGQISYSLLWRIANGEVFGTETPVELKLLEIPQALGGAEGVAMELLDSAFPLLRNITITADANEAFDGANAAFLVGAKPRGKGEERADLLANNGKIFGPQGKAINDNAADDIRVLVVGNPANTNALIASAAAPDVPASRFNAMMRLDHNRAISQLATKLGRGSAEFNNIVVWGNHSATQFPDITYATVGGEKVTDLVDHDWYVEEFIPRVANRGAEIIEVRGKSSAASAASSAIDHMRDWVQGTEAWSSAAIPSTGAYGIPEGIFVGLPTVSRNGEWEIVEGLEISDFQRARIDANAQELQAEREAVRDLL</sequence>
<accession>A4QGA0</accession>
<comment type="function">
    <text evidence="1">Catalyzes the reversible oxidation of malate to oxaloacetate.</text>
</comment>
<comment type="catalytic activity">
    <reaction evidence="1">
        <text>(S)-malate + NAD(+) = oxaloacetate + NADH + H(+)</text>
        <dbReference type="Rhea" id="RHEA:21432"/>
        <dbReference type="ChEBI" id="CHEBI:15378"/>
        <dbReference type="ChEBI" id="CHEBI:15589"/>
        <dbReference type="ChEBI" id="CHEBI:16452"/>
        <dbReference type="ChEBI" id="CHEBI:57540"/>
        <dbReference type="ChEBI" id="CHEBI:57945"/>
        <dbReference type="EC" id="1.1.1.37"/>
    </reaction>
</comment>
<comment type="similarity">
    <text evidence="1">Belongs to the LDH/MDH superfamily. MDH type 2 family.</text>
</comment>
<organism>
    <name type="scientific">Corynebacterium glutamicum (strain R)</name>
    <dbReference type="NCBI Taxonomy" id="340322"/>
    <lineage>
        <taxon>Bacteria</taxon>
        <taxon>Bacillati</taxon>
        <taxon>Actinomycetota</taxon>
        <taxon>Actinomycetes</taxon>
        <taxon>Mycobacteriales</taxon>
        <taxon>Corynebacteriaceae</taxon>
        <taxon>Corynebacterium</taxon>
    </lineage>
</organism>
<gene>
    <name evidence="1" type="primary">mdh</name>
    <name type="ordered locus">cgR_2262</name>
</gene>
<protein>
    <recommendedName>
        <fullName evidence="1">Malate dehydrogenase</fullName>
        <ecNumber evidence="1">1.1.1.37</ecNumber>
    </recommendedName>
</protein>
<proteinExistence type="inferred from homology"/>
<evidence type="ECO:0000255" key="1">
    <source>
        <dbReference type="HAMAP-Rule" id="MF_01517"/>
    </source>
</evidence>
<keyword id="KW-0520">NAD</keyword>
<keyword id="KW-0560">Oxidoreductase</keyword>
<keyword id="KW-0816">Tricarboxylic acid cycle</keyword>